<comment type="catalytic activity">
    <reaction evidence="1">
        <text>tRNA(Gly) + glycine + ATP = glycyl-tRNA(Gly) + AMP + diphosphate</text>
        <dbReference type="Rhea" id="RHEA:16013"/>
        <dbReference type="Rhea" id="RHEA-COMP:9664"/>
        <dbReference type="Rhea" id="RHEA-COMP:9683"/>
        <dbReference type="ChEBI" id="CHEBI:30616"/>
        <dbReference type="ChEBI" id="CHEBI:33019"/>
        <dbReference type="ChEBI" id="CHEBI:57305"/>
        <dbReference type="ChEBI" id="CHEBI:78442"/>
        <dbReference type="ChEBI" id="CHEBI:78522"/>
        <dbReference type="ChEBI" id="CHEBI:456215"/>
        <dbReference type="EC" id="6.1.1.14"/>
    </reaction>
</comment>
<comment type="subunit">
    <text evidence="1">Tetramer of two alpha and two beta subunits.</text>
</comment>
<comment type="subcellular location">
    <subcellularLocation>
        <location evidence="1">Cytoplasm</location>
    </subcellularLocation>
</comment>
<comment type="similarity">
    <text evidence="1">Belongs to the class-II aminoacyl-tRNA synthetase family.</text>
</comment>
<sequence>MYLQDVIMKLNDFWASKGCLLEQPYDMEVGAGTFHPATFFGSLRKGLWKVAYVQPSRRPTDGRYGENPNRLQRYFQYQVIIKPSPENSQELYLESLEYLGINLKEHDIRFVEDNWESPTLGAWGVGWEVWLDGMEITQFTYFQQIGGISLKDIPLEITYGLERIAMYLQGVDNVYEVQWNENVKYGDVFLENEREFSVFNFEEANVGLLFRHFDEYEKEFYRLVEKNLYLPAYDYVLKCSHTFNLLDARGAISVSQRQTYVKRIQAMARKVARVFLEVQVNENSPA</sequence>
<evidence type="ECO:0000255" key="1">
    <source>
        <dbReference type="HAMAP-Rule" id="MF_00254"/>
    </source>
</evidence>
<name>SYGA_THEP1</name>
<organism>
    <name type="scientific">Thermotoga petrophila (strain ATCC BAA-488 / DSM 13995 / JCM 10881 / RKU-1)</name>
    <dbReference type="NCBI Taxonomy" id="390874"/>
    <lineage>
        <taxon>Bacteria</taxon>
        <taxon>Thermotogati</taxon>
        <taxon>Thermotogota</taxon>
        <taxon>Thermotogae</taxon>
        <taxon>Thermotogales</taxon>
        <taxon>Thermotogaceae</taxon>
        <taxon>Thermotoga</taxon>
    </lineage>
</organism>
<reference key="1">
    <citation type="submission" date="2007-05" db="EMBL/GenBank/DDBJ databases">
        <title>Complete sequence of Thermotoga petrophila RKU-1.</title>
        <authorList>
            <consortium name="US DOE Joint Genome Institute"/>
            <person name="Copeland A."/>
            <person name="Lucas S."/>
            <person name="Lapidus A."/>
            <person name="Barry K."/>
            <person name="Glavina del Rio T."/>
            <person name="Dalin E."/>
            <person name="Tice H."/>
            <person name="Pitluck S."/>
            <person name="Sims D."/>
            <person name="Brettin T."/>
            <person name="Bruce D."/>
            <person name="Detter J.C."/>
            <person name="Han C."/>
            <person name="Tapia R."/>
            <person name="Schmutz J."/>
            <person name="Larimer F."/>
            <person name="Land M."/>
            <person name="Hauser L."/>
            <person name="Kyrpides N."/>
            <person name="Mikhailova N."/>
            <person name="Nelson K."/>
            <person name="Gogarten J.P."/>
            <person name="Noll K."/>
            <person name="Richardson P."/>
        </authorList>
    </citation>
    <scope>NUCLEOTIDE SEQUENCE [LARGE SCALE GENOMIC DNA]</scope>
    <source>
        <strain>ATCC BAA-488 / DSM 13995 / JCM 10881 / RKU-1</strain>
    </source>
</reference>
<gene>
    <name evidence="1" type="primary">glyQ</name>
    <name type="ordered locus">Tpet_0708</name>
</gene>
<feature type="chain" id="PRO_1000047522" description="Glycine--tRNA ligase alpha subunit">
    <location>
        <begin position="1"/>
        <end position="286"/>
    </location>
</feature>
<dbReference type="EC" id="6.1.1.14" evidence="1"/>
<dbReference type="EMBL" id="CP000702">
    <property type="protein sequence ID" value="ABQ46728.1"/>
    <property type="molecule type" value="Genomic_DNA"/>
</dbReference>
<dbReference type="RefSeq" id="WP_011943312.1">
    <property type="nucleotide sequence ID" value="NC_009486.1"/>
</dbReference>
<dbReference type="SMR" id="A5IKK5"/>
<dbReference type="STRING" id="390874.Tpet_0708"/>
<dbReference type="KEGG" id="tpt:Tpet_0708"/>
<dbReference type="eggNOG" id="COG0752">
    <property type="taxonomic scope" value="Bacteria"/>
</dbReference>
<dbReference type="HOGENOM" id="CLU_057066_1_0_0"/>
<dbReference type="Proteomes" id="UP000006558">
    <property type="component" value="Chromosome"/>
</dbReference>
<dbReference type="GO" id="GO:0005829">
    <property type="term" value="C:cytosol"/>
    <property type="evidence" value="ECO:0007669"/>
    <property type="project" value="TreeGrafter"/>
</dbReference>
<dbReference type="GO" id="GO:0005524">
    <property type="term" value="F:ATP binding"/>
    <property type="evidence" value="ECO:0007669"/>
    <property type="project" value="UniProtKB-UniRule"/>
</dbReference>
<dbReference type="GO" id="GO:0004820">
    <property type="term" value="F:glycine-tRNA ligase activity"/>
    <property type="evidence" value="ECO:0007669"/>
    <property type="project" value="UniProtKB-UniRule"/>
</dbReference>
<dbReference type="GO" id="GO:0006426">
    <property type="term" value="P:glycyl-tRNA aminoacylation"/>
    <property type="evidence" value="ECO:0007669"/>
    <property type="project" value="UniProtKB-UniRule"/>
</dbReference>
<dbReference type="CDD" id="cd00733">
    <property type="entry name" value="GlyRS_alpha_core"/>
    <property type="match status" value="1"/>
</dbReference>
<dbReference type="FunFam" id="3.30.930.10:FF:000006">
    <property type="entry name" value="Glycine--tRNA ligase alpha subunit"/>
    <property type="match status" value="1"/>
</dbReference>
<dbReference type="Gene3D" id="3.30.930.10">
    <property type="entry name" value="Bira Bifunctional Protein, Domain 2"/>
    <property type="match status" value="1"/>
</dbReference>
<dbReference type="Gene3D" id="1.20.58.180">
    <property type="entry name" value="Class II aaRS and biotin synthetases, domain 2"/>
    <property type="match status" value="1"/>
</dbReference>
<dbReference type="HAMAP" id="MF_00254">
    <property type="entry name" value="Gly_tRNA_synth_alpha"/>
    <property type="match status" value="1"/>
</dbReference>
<dbReference type="InterPro" id="IPR045864">
    <property type="entry name" value="aa-tRNA-synth_II/BPL/LPL"/>
</dbReference>
<dbReference type="InterPro" id="IPR006194">
    <property type="entry name" value="Gly-tRNA-synth_heterodimer"/>
</dbReference>
<dbReference type="InterPro" id="IPR002310">
    <property type="entry name" value="Gly-tRNA_ligase_asu"/>
</dbReference>
<dbReference type="NCBIfam" id="TIGR00388">
    <property type="entry name" value="glyQ"/>
    <property type="match status" value="1"/>
</dbReference>
<dbReference type="NCBIfam" id="NF006827">
    <property type="entry name" value="PRK09348.1"/>
    <property type="match status" value="1"/>
</dbReference>
<dbReference type="PANTHER" id="PTHR30075:SF2">
    <property type="entry name" value="GLYCINE--TRNA LIGASE, CHLOROPLASTIC_MITOCHONDRIAL 2"/>
    <property type="match status" value="1"/>
</dbReference>
<dbReference type="PANTHER" id="PTHR30075">
    <property type="entry name" value="GLYCYL-TRNA SYNTHETASE"/>
    <property type="match status" value="1"/>
</dbReference>
<dbReference type="Pfam" id="PF02091">
    <property type="entry name" value="tRNA-synt_2e"/>
    <property type="match status" value="1"/>
</dbReference>
<dbReference type="PRINTS" id="PR01044">
    <property type="entry name" value="TRNASYNTHGA"/>
</dbReference>
<dbReference type="SUPFAM" id="SSF55681">
    <property type="entry name" value="Class II aaRS and biotin synthetases"/>
    <property type="match status" value="1"/>
</dbReference>
<dbReference type="PROSITE" id="PS50861">
    <property type="entry name" value="AA_TRNA_LIGASE_II_GLYAB"/>
    <property type="match status" value="1"/>
</dbReference>
<accession>A5IKK5</accession>
<keyword id="KW-0030">Aminoacyl-tRNA synthetase</keyword>
<keyword id="KW-0067">ATP-binding</keyword>
<keyword id="KW-0963">Cytoplasm</keyword>
<keyword id="KW-0436">Ligase</keyword>
<keyword id="KW-0547">Nucleotide-binding</keyword>
<keyword id="KW-0648">Protein biosynthesis</keyword>
<proteinExistence type="inferred from homology"/>
<protein>
    <recommendedName>
        <fullName evidence="1">Glycine--tRNA ligase alpha subunit</fullName>
        <ecNumber evidence="1">6.1.1.14</ecNumber>
    </recommendedName>
    <alternativeName>
        <fullName evidence="1">Glycyl-tRNA synthetase alpha subunit</fullName>
        <shortName evidence="1">GlyRS</shortName>
    </alternativeName>
</protein>